<feature type="chain" id="PRO_1000201741" description="Endoribonuclease YbeY">
    <location>
        <begin position="1"/>
        <end position="159"/>
    </location>
</feature>
<feature type="binding site" evidence="1">
    <location>
        <position position="114"/>
    </location>
    <ligand>
        <name>Zn(2+)</name>
        <dbReference type="ChEBI" id="CHEBI:29105"/>
        <note>catalytic</note>
    </ligand>
</feature>
<feature type="binding site" evidence="1">
    <location>
        <position position="118"/>
    </location>
    <ligand>
        <name>Zn(2+)</name>
        <dbReference type="ChEBI" id="CHEBI:29105"/>
        <note>catalytic</note>
    </ligand>
</feature>
<feature type="binding site" evidence="1">
    <location>
        <position position="124"/>
    </location>
    <ligand>
        <name>Zn(2+)</name>
        <dbReference type="ChEBI" id="CHEBI:29105"/>
        <note>catalytic</note>
    </ligand>
</feature>
<organism>
    <name type="scientific">Pectobacterium carotovorum subsp. carotovorum (strain PC1)</name>
    <dbReference type="NCBI Taxonomy" id="561230"/>
    <lineage>
        <taxon>Bacteria</taxon>
        <taxon>Pseudomonadati</taxon>
        <taxon>Pseudomonadota</taxon>
        <taxon>Gammaproteobacteria</taxon>
        <taxon>Enterobacterales</taxon>
        <taxon>Pectobacteriaceae</taxon>
        <taxon>Pectobacterium</taxon>
    </lineage>
</organism>
<keyword id="KW-0963">Cytoplasm</keyword>
<keyword id="KW-0255">Endonuclease</keyword>
<keyword id="KW-0378">Hydrolase</keyword>
<keyword id="KW-0479">Metal-binding</keyword>
<keyword id="KW-0540">Nuclease</keyword>
<keyword id="KW-0690">Ribosome biogenesis</keyword>
<keyword id="KW-0698">rRNA processing</keyword>
<keyword id="KW-0862">Zinc</keyword>
<name>YBEY_PECCP</name>
<proteinExistence type="inferred from homology"/>
<comment type="function">
    <text evidence="1">Single strand-specific metallo-endoribonuclease involved in late-stage 70S ribosome quality control and in maturation of the 3' terminus of the 16S rRNA.</text>
</comment>
<comment type="cofactor">
    <cofactor evidence="1">
        <name>Zn(2+)</name>
        <dbReference type="ChEBI" id="CHEBI:29105"/>
    </cofactor>
    <text evidence="1">Binds 1 zinc ion.</text>
</comment>
<comment type="subcellular location">
    <subcellularLocation>
        <location evidence="1">Cytoplasm</location>
    </subcellularLocation>
</comment>
<comment type="similarity">
    <text evidence="1">Belongs to the endoribonuclease YbeY family.</text>
</comment>
<dbReference type="EC" id="3.1.-.-" evidence="1"/>
<dbReference type="EMBL" id="CP001657">
    <property type="protein sequence ID" value="ACT12243.1"/>
    <property type="molecule type" value="Genomic_DNA"/>
</dbReference>
<dbReference type="RefSeq" id="WP_015839476.1">
    <property type="nucleotide sequence ID" value="NC_012917.1"/>
</dbReference>
<dbReference type="SMR" id="C6DBX6"/>
<dbReference type="STRING" id="561230.PC1_1195"/>
<dbReference type="GeneID" id="67795044"/>
<dbReference type="KEGG" id="pct:PC1_1195"/>
<dbReference type="eggNOG" id="COG0319">
    <property type="taxonomic scope" value="Bacteria"/>
</dbReference>
<dbReference type="HOGENOM" id="CLU_106710_0_1_6"/>
<dbReference type="OrthoDB" id="9807740at2"/>
<dbReference type="Proteomes" id="UP000002736">
    <property type="component" value="Chromosome"/>
</dbReference>
<dbReference type="GO" id="GO:0005737">
    <property type="term" value="C:cytoplasm"/>
    <property type="evidence" value="ECO:0007669"/>
    <property type="project" value="UniProtKB-SubCell"/>
</dbReference>
<dbReference type="GO" id="GO:0004222">
    <property type="term" value="F:metalloendopeptidase activity"/>
    <property type="evidence" value="ECO:0007669"/>
    <property type="project" value="InterPro"/>
</dbReference>
<dbReference type="GO" id="GO:0004521">
    <property type="term" value="F:RNA endonuclease activity"/>
    <property type="evidence" value="ECO:0007669"/>
    <property type="project" value="UniProtKB-UniRule"/>
</dbReference>
<dbReference type="GO" id="GO:0008270">
    <property type="term" value="F:zinc ion binding"/>
    <property type="evidence" value="ECO:0007669"/>
    <property type="project" value="UniProtKB-UniRule"/>
</dbReference>
<dbReference type="GO" id="GO:0006364">
    <property type="term" value="P:rRNA processing"/>
    <property type="evidence" value="ECO:0007669"/>
    <property type="project" value="UniProtKB-UniRule"/>
</dbReference>
<dbReference type="Gene3D" id="3.40.390.30">
    <property type="entry name" value="Metalloproteases ('zincins'), catalytic domain"/>
    <property type="match status" value="1"/>
</dbReference>
<dbReference type="HAMAP" id="MF_00009">
    <property type="entry name" value="Endoribonucl_YbeY"/>
    <property type="match status" value="1"/>
</dbReference>
<dbReference type="InterPro" id="IPR023091">
    <property type="entry name" value="MetalPrtase_cat_dom_sf_prd"/>
</dbReference>
<dbReference type="InterPro" id="IPR002036">
    <property type="entry name" value="YbeY"/>
</dbReference>
<dbReference type="InterPro" id="IPR020549">
    <property type="entry name" value="YbeY_CS"/>
</dbReference>
<dbReference type="NCBIfam" id="TIGR00043">
    <property type="entry name" value="rRNA maturation RNase YbeY"/>
    <property type="match status" value="1"/>
</dbReference>
<dbReference type="PANTHER" id="PTHR46986">
    <property type="entry name" value="ENDORIBONUCLEASE YBEY, CHLOROPLASTIC"/>
    <property type="match status" value="1"/>
</dbReference>
<dbReference type="PANTHER" id="PTHR46986:SF1">
    <property type="entry name" value="ENDORIBONUCLEASE YBEY, CHLOROPLASTIC"/>
    <property type="match status" value="1"/>
</dbReference>
<dbReference type="Pfam" id="PF02130">
    <property type="entry name" value="YbeY"/>
    <property type="match status" value="1"/>
</dbReference>
<dbReference type="SUPFAM" id="SSF55486">
    <property type="entry name" value="Metalloproteases ('zincins'), catalytic domain"/>
    <property type="match status" value="1"/>
</dbReference>
<dbReference type="PROSITE" id="PS01306">
    <property type="entry name" value="UPF0054"/>
    <property type="match status" value="1"/>
</dbReference>
<evidence type="ECO:0000255" key="1">
    <source>
        <dbReference type="HAMAP-Rule" id="MF_00009"/>
    </source>
</evidence>
<accession>C6DBX6</accession>
<sequence length="159" mass="18095">MSQVILDLQIASEQAQGLPEEKDFQRWLEGVLPQFQEVSEVTIRIVDEAESRDLNNTYRGKDKPTNVLSFPFEAPPEVELPLLGDLIICRQVVEQEAAEQEKTVEEHWAHMVVHGSLHLLGYDHIEDSEAEEMEALETEIMQSMGYADPYLAEKDGLTE</sequence>
<protein>
    <recommendedName>
        <fullName evidence="1">Endoribonuclease YbeY</fullName>
        <ecNumber evidence="1">3.1.-.-</ecNumber>
    </recommendedName>
</protein>
<gene>
    <name evidence="1" type="primary">ybeY</name>
    <name type="ordered locus">PC1_1195</name>
</gene>
<reference key="1">
    <citation type="submission" date="2009-07" db="EMBL/GenBank/DDBJ databases">
        <title>Complete sequence of Pectobacterium carotovorum subsp. carotovorum PC1.</title>
        <authorList>
            <consortium name="US DOE Joint Genome Institute"/>
            <person name="Lucas S."/>
            <person name="Copeland A."/>
            <person name="Lapidus A."/>
            <person name="Glavina del Rio T."/>
            <person name="Tice H."/>
            <person name="Bruce D."/>
            <person name="Goodwin L."/>
            <person name="Pitluck S."/>
            <person name="Munk A.C."/>
            <person name="Brettin T."/>
            <person name="Detter J.C."/>
            <person name="Han C."/>
            <person name="Tapia R."/>
            <person name="Larimer F."/>
            <person name="Land M."/>
            <person name="Hauser L."/>
            <person name="Kyrpides N."/>
            <person name="Mikhailova N."/>
            <person name="Balakrishnan V."/>
            <person name="Glasner J."/>
            <person name="Perna N.T."/>
        </authorList>
    </citation>
    <scope>NUCLEOTIDE SEQUENCE [LARGE SCALE GENOMIC DNA]</scope>
    <source>
        <strain>PC1</strain>
    </source>
</reference>